<gene>
    <name type="ordered locus">mma_2551</name>
</gene>
<feature type="chain" id="PRO_1000001661" description="UPF0758 protein mma_2551">
    <location>
        <begin position="1"/>
        <end position="224"/>
    </location>
</feature>
<feature type="domain" description="MPN" evidence="1">
    <location>
        <begin position="102"/>
        <end position="224"/>
    </location>
</feature>
<feature type="short sequence motif" description="JAMM motif" evidence="1">
    <location>
        <begin position="173"/>
        <end position="186"/>
    </location>
</feature>
<feature type="binding site" evidence="1">
    <location>
        <position position="173"/>
    </location>
    <ligand>
        <name>Zn(2+)</name>
        <dbReference type="ChEBI" id="CHEBI:29105"/>
        <note>catalytic</note>
    </ligand>
</feature>
<feature type="binding site" evidence="1">
    <location>
        <position position="175"/>
    </location>
    <ligand>
        <name>Zn(2+)</name>
        <dbReference type="ChEBI" id="CHEBI:29105"/>
        <note>catalytic</note>
    </ligand>
</feature>
<feature type="binding site" evidence="1">
    <location>
        <position position="186"/>
    </location>
    <ligand>
        <name>Zn(2+)</name>
        <dbReference type="ChEBI" id="CHEBI:29105"/>
        <note>catalytic</note>
    </ligand>
</feature>
<accession>A6T144</accession>
<reference key="1">
    <citation type="journal article" date="2007" name="PLoS Genet.">
        <title>Genome analysis of Minibacterium massiliensis highlights the convergent evolution of water-living bacteria.</title>
        <authorList>
            <person name="Audic S."/>
            <person name="Robert C."/>
            <person name="Campagna B."/>
            <person name="Parinello H."/>
            <person name="Claverie J.-M."/>
            <person name="Raoult D."/>
            <person name="Drancourt M."/>
        </authorList>
    </citation>
    <scope>NUCLEOTIDE SEQUENCE [LARGE SCALE GENOMIC DNA]</scope>
    <source>
        <strain>Marseille</strain>
    </source>
</reference>
<sequence>MAISDWPEQDRPRERLIKHGAAILTDAELLAIFLRLGVAGKSAVDLARDMLNHFGSLHALFSASLDDFSQLNGLGPAKYAQLQAVLELTRRSLSEELQIGISLNSPQAVKKYLQLLLGGKPYEAFAVLFLDVKNRLIACEELFRGTLTHTSVYPREIVKEALTHNAASVILAHNHPSGSSEPSAADHSLTQALKQALALIDVRVLDHFVVGGKNVYSFAEHGHL</sequence>
<comment type="similarity">
    <text evidence="2">Belongs to the UPF0758 family.</text>
</comment>
<evidence type="ECO:0000255" key="1">
    <source>
        <dbReference type="PROSITE-ProRule" id="PRU01182"/>
    </source>
</evidence>
<evidence type="ECO:0000305" key="2"/>
<proteinExistence type="inferred from homology"/>
<protein>
    <recommendedName>
        <fullName>UPF0758 protein mma_2551</fullName>
    </recommendedName>
</protein>
<organism>
    <name type="scientific">Janthinobacterium sp. (strain Marseille)</name>
    <name type="common">Minibacterium massiliensis</name>
    <dbReference type="NCBI Taxonomy" id="375286"/>
    <lineage>
        <taxon>Bacteria</taxon>
        <taxon>Pseudomonadati</taxon>
        <taxon>Pseudomonadota</taxon>
        <taxon>Betaproteobacteria</taxon>
        <taxon>Burkholderiales</taxon>
        <taxon>Oxalobacteraceae</taxon>
        <taxon>Janthinobacterium</taxon>
    </lineage>
</organism>
<keyword id="KW-0378">Hydrolase</keyword>
<keyword id="KW-0479">Metal-binding</keyword>
<keyword id="KW-0482">Metalloprotease</keyword>
<keyword id="KW-0645">Protease</keyword>
<keyword id="KW-0862">Zinc</keyword>
<name>Y2551_JANMA</name>
<dbReference type="EMBL" id="CP000269">
    <property type="protein sequence ID" value="ABR88373.1"/>
    <property type="molecule type" value="Genomic_DNA"/>
</dbReference>
<dbReference type="RefSeq" id="WP_012080403.1">
    <property type="nucleotide sequence ID" value="NC_009659.1"/>
</dbReference>
<dbReference type="SMR" id="A6T144"/>
<dbReference type="STRING" id="375286.mma_2551"/>
<dbReference type="KEGG" id="mms:mma_2551"/>
<dbReference type="eggNOG" id="COG2003">
    <property type="taxonomic scope" value="Bacteria"/>
</dbReference>
<dbReference type="HOGENOM" id="CLU_073529_0_1_4"/>
<dbReference type="OrthoDB" id="9804482at2"/>
<dbReference type="Proteomes" id="UP000006388">
    <property type="component" value="Chromosome"/>
</dbReference>
<dbReference type="GO" id="GO:0046872">
    <property type="term" value="F:metal ion binding"/>
    <property type="evidence" value="ECO:0007669"/>
    <property type="project" value="UniProtKB-KW"/>
</dbReference>
<dbReference type="GO" id="GO:0008237">
    <property type="term" value="F:metallopeptidase activity"/>
    <property type="evidence" value="ECO:0007669"/>
    <property type="project" value="UniProtKB-KW"/>
</dbReference>
<dbReference type="GO" id="GO:0006508">
    <property type="term" value="P:proteolysis"/>
    <property type="evidence" value="ECO:0007669"/>
    <property type="project" value="UniProtKB-KW"/>
</dbReference>
<dbReference type="CDD" id="cd08071">
    <property type="entry name" value="MPN_DUF2466"/>
    <property type="match status" value="1"/>
</dbReference>
<dbReference type="Gene3D" id="1.10.150.20">
    <property type="entry name" value="5' to 3' exonuclease, C-terminal subdomain"/>
    <property type="match status" value="1"/>
</dbReference>
<dbReference type="Gene3D" id="3.40.140.10">
    <property type="entry name" value="Cytidine Deaminase, domain 2"/>
    <property type="match status" value="1"/>
</dbReference>
<dbReference type="InterPro" id="IPR037518">
    <property type="entry name" value="MPN"/>
</dbReference>
<dbReference type="InterPro" id="IPR025657">
    <property type="entry name" value="RadC_JAB"/>
</dbReference>
<dbReference type="InterPro" id="IPR010994">
    <property type="entry name" value="RuvA_2-like"/>
</dbReference>
<dbReference type="InterPro" id="IPR001405">
    <property type="entry name" value="UPF0758"/>
</dbReference>
<dbReference type="InterPro" id="IPR020891">
    <property type="entry name" value="UPF0758_CS"/>
</dbReference>
<dbReference type="InterPro" id="IPR046778">
    <property type="entry name" value="UPF0758_N"/>
</dbReference>
<dbReference type="NCBIfam" id="NF000642">
    <property type="entry name" value="PRK00024.1"/>
    <property type="match status" value="1"/>
</dbReference>
<dbReference type="NCBIfam" id="TIGR00608">
    <property type="entry name" value="radc"/>
    <property type="match status" value="1"/>
</dbReference>
<dbReference type="PANTHER" id="PTHR30471">
    <property type="entry name" value="DNA REPAIR PROTEIN RADC"/>
    <property type="match status" value="1"/>
</dbReference>
<dbReference type="PANTHER" id="PTHR30471:SF3">
    <property type="entry name" value="UPF0758 PROTEIN YEES-RELATED"/>
    <property type="match status" value="1"/>
</dbReference>
<dbReference type="Pfam" id="PF04002">
    <property type="entry name" value="RadC"/>
    <property type="match status" value="1"/>
</dbReference>
<dbReference type="Pfam" id="PF20582">
    <property type="entry name" value="UPF0758_N"/>
    <property type="match status" value="1"/>
</dbReference>
<dbReference type="SUPFAM" id="SSF102712">
    <property type="entry name" value="JAB1/MPN domain"/>
    <property type="match status" value="1"/>
</dbReference>
<dbReference type="SUPFAM" id="SSF47781">
    <property type="entry name" value="RuvA domain 2-like"/>
    <property type="match status" value="1"/>
</dbReference>
<dbReference type="PROSITE" id="PS50249">
    <property type="entry name" value="MPN"/>
    <property type="match status" value="1"/>
</dbReference>
<dbReference type="PROSITE" id="PS01302">
    <property type="entry name" value="UPF0758"/>
    <property type="match status" value="1"/>
</dbReference>